<protein>
    <recommendedName>
        <fullName>Protein delta homolog 1</fullName>
        <shortName>DLK-1</shortName>
    </recommendedName>
    <alternativeName>
        <fullName evidence="7 8">Preadipocyte factor 1</fullName>
        <shortName>Pref-1</shortName>
    </alternativeName>
    <component>
        <recommendedName>
            <fullName>Fetal antigen 1</fullName>
            <shortName>FA1</shortName>
        </recommendedName>
    </component>
</protein>
<feature type="signal peptide" evidence="2">
    <location>
        <begin position="1"/>
        <end position="23"/>
    </location>
</feature>
<feature type="chain" id="PRO_5014306601" description="Protein delta homolog 1">
    <location>
        <begin position="24"/>
        <end position="383"/>
    </location>
</feature>
<feature type="chain" id="PRO_0000444802" description="Fetal antigen 1">
    <location>
        <begin position="24"/>
        <end position="303"/>
    </location>
</feature>
<feature type="topological domain" description="Extracellular" evidence="9">
    <location>
        <begin position="24"/>
        <end position="306"/>
    </location>
</feature>
<feature type="transmembrane region" description="Helical" evidence="2">
    <location>
        <begin position="307"/>
        <end position="327"/>
    </location>
</feature>
<feature type="topological domain" description="Cytoplasmic" evidence="9">
    <location>
        <begin position="328"/>
        <end position="383"/>
    </location>
</feature>
<feature type="domain" description="EGF-like 1" evidence="3">
    <location>
        <begin position="24"/>
        <end position="55"/>
    </location>
</feature>
<feature type="domain" description="EGF-like 2" evidence="3">
    <location>
        <begin position="59"/>
        <end position="86"/>
    </location>
</feature>
<feature type="domain" description="EGF-like 3" evidence="3">
    <location>
        <begin position="88"/>
        <end position="125"/>
    </location>
</feature>
<feature type="domain" description="EGF-like 4" evidence="3">
    <location>
        <begin position="127"/>
        <end position="168"/>
    </location>
</feature>
<feature type="domain" description="EGF-like 5" evidence="3">
    <location>
        <begin position="170"/>
        <end position="206"/>
    </location>
</feature>
<feature type="domain" description="EGF-like 6" evidence="3">
    <location>
        <begin position="208"/>
        <end position="245"/>
    </location>
</feature>
<feature type="disulfide bond" evidence="3">
    <location>
        <begin position="26"/>
        <end position="37"/>
    </location>
</feature>
<feature type="disulfide bond" evidence="3">
    <location>
        <begin position="30"/>
        <end position="43"/>
    </location>
</feature>
<feature type="disulfide bond" evidence="3">
    <location>
        <begin position="45"/>
        <end position="54"/>
    </location>
</feature>
<feature type="disulfide bond" evidence="3">
    <location>
        <begin position="63"/>
        <end position="68"/>
    </location>
</feature>
<feature type="disulfide bond" evidence="3">
    <location>
        <begin position="76"/>
        <end position="85"/>
    </location>
</feature>
<feature type="disulfide bond" evidence="3">
    <location>
        <begin position="92"/>
        <end position="103"/>
    </location>
</feature>
<feature type="disulfide bond" evidence="3">
    <location>
        <begin position="97"/>
        <end position="113"/>
    </location>
</feature>
<feature type="disulfide bond" evidence="3">
    <location>
        <begin position="115"/>
        <end position="124"/>
    </location>
</feature>
<feature type="disulfide bond" evidence="3">
    <location>
        <begin position="131"/>
        <end position="144"/>
    </location>
</feature>
<feature type="disulfide bond" evidence="3">
    <location>
        <begin position="138"/>
        <end position="156"/>
    </location>
</feature>
<feature type="disulfide bond" evidence="3">
    <location>
        <begin position="158"/>
        <end position="167"/>
    </location>
</feature>
<feature type="disulfide bond" evidence="3">
    <location>
        <begin position="174"/>
        <end position="185"/>
    </location>
</feature>
<feature type="disulfide bond" evidence="3">
    <location>
        <begin position="179"/>
        <end position="194"/>
    </location>
</feature>
<feature type="disulfide bond" evidence="3">
    <location>
        <begin position="196"/>
        <end position="205"/>
    </location>
</feature>
<feature type="disulfide bond" evidence="3">
    <location>
        <begin position="212"/>
        <end position="223"/>
    </location>
</feature>
<feature type="disulfide bond" evidence="3">
    <location>
        <begin position="217"/>
        <end position="233"/>
    </location>
</feature>
<feature type="disulfide bond" evidence="3">
    <location>
        <begin position="235"/>
        <end position="244"/>
    </location>
</feature>
<feature type="sequence conflict" description="In Ref. 1; AAB87095." evidence="9" ref="1">
    <original>H</original>
    <variation>Q</variation>
    <location>
        <position position="273"/>
    </location>
</feature>
<feature type="sequence conflict" description="In Ref. 1; AAB87095." evidence="9" ref="1">
    <original>S</original>
    <variation>R</variation>
    <location>
        <position position="315"/>
    </location>
</feature>
<feature type="sequence conflict" description="In Ref. 1; AAB87095." evidence="9" ref="1">
    <original>G</original>
    <variation>D</variation>
    <location>
        <position position="320"/>
    </location>
</feature>
<feature type="sequence conflict" description="In Ref. 1; AAB87095." evidence="9" ref="1">
    <original>A</original>
    <variation>G</variation>
    <location>
        <position position="323"/>
    </location>
</feature>
<accession>O70534</accession>
<accession>Q62779</accession>
<evidence type="ECO:0000250" key="1">
    <source>
        <dbReference type="UniProtKB" id="Q09163"/>
    </source>
</evidence>
<evidence type="ECO:0000255" key="2"/>
<evidence type="ECO:0000255" key="3">
    <source>
        <dbReference type="PROSITE-ProRule" id="PRU00076"/>
    </source>
</evidence>
<evidence type="ECO:0000269" key="4">
    <source>
    </source>
</evidence>
<evidence type="ECO:0000269" key="5">
    <source>
    </source>
</evidence>
<evidence type="ECO:0000269" key="6">
    <source>
    </source>
</evidence>
<evidence type="ECO:0000303" key="7">
    <source>
    </source>
</evidence>
<evidence type="ECO:0000303" key="8">
    <source>
    </source>
</evidence>
<evidence type="ECO:0000305" key="9"/>
<sequence>MIATGALLRVLLLLLAFGHSTYGAECDPACDPQHGFCEADNVCRCEPGWEGPLCEKCVTSPGCVNGLCEEPWQCVCKEGWDGKFCEIDIRACTSTPCANNGTCVDLEKGQYECSCTPGFSGKDCQHKAGPCVINGSPCQHGGACVDDEGRASHASCLCPPGFSGNFCEIVTNSCTPNPCENDGVCTDIGGDFRCRCPAGFVDKTCSRPVSNCASGPCLNGGTCLQHTQVSFECLCKPPFMGPTCAKKRGTSPVQVTHLPSGYGLTYRLTPGVHELPVQQPEHHILKVSMKELNKSAPLLTEGQAICFTILGVLTSLVVLGTVAIVFLNKCEAWVSNLRYNHMLRKKKNLLLQYNSGEELAVNIIFPEKIDMTTFNKEAGDEDI</sequence>
<name>DLK1_RAT</name>
<proteinExistence type="evidence at protein level"/>
<reference key="1">
    <citation type="journal article" date="1997" name="Endocrinology">
        <title>Growth hormone and prolactin stimulate the expression of rat preadipocyte factor-1/delta-like protein in pancreatic islets: molecular cloning and expression pattern during development and growth of the endocrine pancreas.</title>
        <authorList>
            <person name="Carlsson C."/>
            <person name="Tornehave D."/>
            <person name="Lindberg K."/>
            <person name="Galante P."/>
            <person name="Billestrup N."/>
            <person name="Michelsen B."/>
            <person name="Larsson L.I."/>
            <person name="Nielsen J.H."/>
        </authorList>
    </citation>
    <scope>NUCLEOTIDE SEQUENCE [MRNA]</scope>
    <scope>TISSUE SPECIFICITY</scope>
    <scope>DEVELOPMENTAL STAGE</scope>
    <source>
        <strain>Wistar</strain>
        <tissue>Pancreatic islet</tissue>
    </source>
</reference>
<reference key="2">
    <citation type="journal article" date="1998" name="Endocrinology">
        <title>Cloning of a membrane-spanning protein with epidermal growth factor-like repeat motifs from adrenal glomerulosa cells.</title>
        <authorList>
            <person name="Halder S.K."/>
            <person name="Takemori H."/>
            <person name="Hatano O."/>
            <person name="Nonaka Y."/>
            <person name="Wada A."/>
            <person name="Okamoto M."/>
        </authorList>
    </citation>
    <scope>NUCLEOTIDE SEQUENCE [MRNA]</scope>
    <scope>SUBCELLULAR LOCATION</scope>
    <scope>TISSUE SPECIFICITY</scope>
    <scope>DEVELOPMENTAL STAGE</scope>
    <source>
        <strain>Sprague-Dawley</strain>
    </source>
</reference>
<reference key="3">
    <citation type="journal article" date="2004" name="Nature">
        <title>Genome sequence of the Brown Norway rat yields insights into mammalian evolution.</title>
        <authorList>
            <person name="Gibbs R.A."/>
            <person name="Weinstock G.M."/>
            <person name="Metzker M.L."/>
            <person name="Muzny D.M."/>
            <person name="Sodergren E.J."/>
            <person name="Scherer S."/>
            <person name="Scott G."/>
            <person name="Steffen D."/>
            <person name="Worley K.C."/>
            <person name="Burch P.E."/>
            <person name="Okwuonu G."/>
            <person name="Hines S."/>
            <person name="Lewis L."/>
            <person name="Deramo C."/>
            <person name="Delgado O."/>
            <person name="Dugan-Rocha S."/>
            <person name="Miner G."/>
            <person name="Morgan M."/>
            <person name="Hawes A."/>
            <person name="Gill R."/>
            <person name="Holt R.A."/>
            <person name="Adams M.D."/>
            <person name="Amanatides P.G."/>
            <person name="Baden-Tillson H."/>
            <person name="Barnstead M."/>
            <person name="Chin S."/>
            <person name="Evans C.A."/>
            <person name="Ferriera S."/>
            <person name="Fosler C."/>
            <person name="Glodek A."/>
            <person name="Gu Z."/>
            <person name="Jennings D."/>
            <person name="Kraft C.L."/>
            <person name="Nguyen T."/>
            <person name="Pfannkoch C.M."/>
            <person name="Sitter C."/>
            <person name="Sutton G.G."/>
            <person name="Venter J.C."/>
            <person name="Woodage T."/>
            <person name="Smith D."/>
            <person name="Lee H.-M."/>
            <person name="Gustafson E."/>
            <person name="Cahill P."/>
            <person name="Kana A."/>
            <person name="Doucette-Stamm L."/>
            <person name="Weinstock K."/>
            <person name="Fechtel K."/>
            <person name="Weiss R.B."/>
            <person name="Dunn D.M."/>
            <person name="Green E.D."/>
            <person name="Blakesley R.W."/>
            <person name="Bouffard G.G."/>
            <person name="De Jong P.J."/>
            <person name="Osoegawa K."/>
            <person name="Zhu B."/>
            <person name="Marra M."/>
            <person name="Schein J."/>
            <person name="Bosdet I."/>
            <person name="Fjell C."/>
            <person name="Jones S."/>
            <person name="Krzywinski M."/>
            <person name="Mathewson C."/>
            <person name="Siddiqui A."/>
            <person name="Wye N."/>
            <person name="McPherson J."/>
            <person name="Zhao S."/>
            <person name="Fraser C.M."/>
            <person name="Shetty J."/>
            <person name="Shatsman S."/>
            <person name="Geer K."/>
            <person name="Chen Y."/>
            <person name="Abramzon S."/>
            <person name="Nierman W.C."/>
            <person name="Havlak P.H."/>
            <person name="Chen R."/>
            <person name="Durbin K.J."/>
            <person name="Egan A."/>
            <person name="Ren Y."/>
            <person name="Song X.-Z."/>
            <person name="Li B."/>
            <person name="Liu Y."/>
            <person name="Qin X."/>
            <person name="Cawley S."/>
            <person name="Cooney A.J."/>
            <person name="D'Souza L.M."/>
            <person name="Martin K."/>
            <person name="Wu J.Q."/>
            <person name="Gonzalez-Garay M.L."/>
            <person name="Jackson A.R."/>
            <person name="Kalafus K.J."/>
            <person name="McLeod M.P."/>
            <person name="Milosavljevic A."/>
            <person name="Virk D."/>
            <person name="Volkov A."/>
            <person name="Wheeler D.A."/>
            <person name="Zhang Z."/>
            <person name="Bailey J.A."/>
            <person name="Eichler E.E."/>
            <person name="Tuzun E."/>
            <person name="Birney E."/>
            <person name="Mongin E."/>
            <person name="Ureta-Vidal A."/>
            <person name="Woodwark C."/>
            <person name="Zdobnov E."/>
            <person name="Bork P."/>
            <person name="Suyama M."/>
            <person name="Torrents D."/>
            <person name="Alexandersson M."/>
            <person name="Trask B.J."/>
            <person name="Young J.M."/>
            <person name="Huang H."/>
            <person name="Wang H."/>
            <person name="Xing H."/>
            <person name="Daniels S."/>
            <person name="Gietzen D."/>
            <person name="Schmidt J."/>
            <person name="Stevens K."/>
            <person name="Vitt U."/>
            <person name="Wingrove J."/>
            <person name="Camara F."/>
            <person name="Mar Alba M."/>
            <person name="Abril J.F."/>
            <person name="Guigo R."/>
            <person name="Smit A."/>
            <person name="Dubchak I."/>
            <person name="Rubin E.M."/>
            <person name="Couronne O."/>
            <person name="Poliakov A."/>
            <person name="Huebner N."/>
            <person name="Ganten D."/>
            <person name="Goesele C."/>
            <person name="Hummel O."/>
            <person name="Kreitler T."/>
            <person name="Lee Y.-A."/>
            <person name="Monti J."/>
            <person name="Schulz H."/>
            <person name="Zimdahl H."/>
            <person name="Himmelbauer H."/>
            <person name="Lehrach H."/>
            <person name="Jacob H.J."/>
            <person name="Bromberg S."/>
            <person name="Gullings-Handley J."/>
            <person name="Jensen-Seaman M.I."/>
            <person name="Kwitek A.E."/>
            <person name="Lazar J."/>
            <person name="Pasko D."/>
            <person name="Tonellato P.J."/>
            <person name="Twigger S."/>
            <person name="Ponting C.P."/>
            <person name="Duarte J.M."/>
            <person name="Rice S."/>
            <person name="Goodstadt L."/>
            <person name="Beatson S.A."/>
            <person name="Emes R.D."/>
            <person name="Winter E.E."/>
            <person name="Webber C."/>
            <person name="Brandt P."/>
            <person name="Nyakatura G."/>
            <person name="Adetobi M."/>
            <person name="Chiaromonte F."/>
            <person name="Elnitski L."/>
            <person name="Eswara P."/>
            <person name="Hardison R.C."/>
            <person name="Hou M."/>
            <person name="Kolbe D."/>
            <person name="Makova K."/>
            <person name="Miller W."/>
            <person name="Nekrutenko A."/>
            <person name="Riemer C."/>
            <person name="Schwartz S."/>
            <person name="Taylor J."/>
            <person name="Yang S."/>
            <person name="Zhang Y."/>
            <person name="Lindpaintner K."/>
            <person name="Andrews T.D."/>
            <person name="Caccamo M."/>
            <person name="Clamp M."/>
            <person name="Clarke L."/>
            <person name="Curwen V."/>
            <person name="Durbin R.M."/>
            <person name="Eyras E."/>
            <person name="Searle S.M."/>
            <person name="Cooper G.M."/>
            <person name="Batzoglou S."/>
            <person name="Brudno M."/>
            <person name="Sidow A."/>
            <person name="Stone E.A."/>
            <person name="Payseur B.A."/>
            <person name="Bourque G."/>
            <person name="Lopez-Otin C."/>
            <person name="Puente X.S."/>
            <person name="Chakrabarti K."/>
            <person name="Chatterji S."/>
            <person name="Dewey C."/>
            <person name="Pachter L."/>
            <person name="Bray N."/>
            <person name="Yap V.B."/>
            <person name="Caspi A."/>
            <person name="Tesler G."/>
            <person name="Pevzner P.A."/>
            <person name="Haussler D."/>
            <person name="Roskin K.M."/>
            <person name="Baertsch R."/>
            <person name="Clawson H."/>
            <person name="Furey T.S."/>
            <person name="Hinrichs A.S."/>
            <person name="Karolchik D."/>
            <person name="Kent W.J."/>
            <person name="Rosenbloom K.R."/>
            <person name="Trumbower H."/>
            <person name="Weirauch M."/>
            <person name="Cooper D.N."/>
            <person name="Stenson P.D."/>
            <person name="Ma B."/>
            <person name="Brent M."/>
            <person name="Arumugam M."/>
            <person name="Shteynberg D."/>
            <person name="Copley R.R."/>
            <person name="Taylor M.S."/>
            <person name="Riethman H."/>
            <person name="Mudunuri U."/>
            <person name="Peterson J."/>
            <person name="Guyer M."/>
            <person name="Felsenfeld A."/>
            <person name="Old S."/>
            <person name="Mockrin S."/>
            <person name="Collins F.S."/>
        </authorList>
    </citation>
    <scope>NUCLEOTIDE SEQUENCE [LARGE SCALE GENOMIC DNA]</scope>
    <source>
        <strain>Brown Norway</strain>
    </source>
</reference>
<reference key="4">
    <citation type="journal article" date="2004" name="Genome Res.">
        <title>The status, quality, and expansion of the NIH full-length cDNA project: the Mammalian Gene Collection (MGC).</title>
        <authorList>
            <consortium name="The MGC Project Team"/>
        </authorList>
    </citation>
    <scope>NUCLEOTIDE SEQUENCE [LARGE SCALE MRNA]</scope>
    <source>
        <tissue>Brain</tissue>
    </source>
</reference>
<reference key="5">
    <citation type="journal article" date="2012" name="J. Biol. Chem.">
        <title>Sh3rf2/POSHER protein promotes cell survival by RING-mediated proteasomal degradation of the c-Jun N-terminal kinase scaffold POSH (Plenty of SH3s) protein.</title>
        <authorList>
            <person name="Wilhelm M."/>
            <person name="Kukekov N.V."/>
            <person name="Schmit T.L."/>
            <person name="Biagas K.V."/>
            <person name="Sproul A.A."/>
            <person name="Gire S."/>
            <person name="Maes M.E."/>
            <person name="Xu Z."/>
            <person name="Greene L.A."/>
        </authorList>
    </citation>
    <scope>INTERACTION WITH SH3RF2</scope>
</reference>
<organism>
    <name type="scientific">Rattus norvegicus</name>
    <name type="common">Rat</name>
    <dbReference type="NCBI Taxonomy" id="10116"/>
    <lineage>
        <taxon>Eukaryota</taxon>
        <taxon>Metazoa</taxon>
        <taxon>Chordata</taxon>
        <taxon>Craniata</taxon>
        <taxon>Vertebrata</taxon>
        <taxon>Euteleostomi</taxon>
        <taxon>Mammalia</taxon>
        <taxon>Eutheria</taxon>
        <taxon>Euarchontoglires</taxon>
        <taxon>Glires</taxon>
        <taxon>Rodentia</taxon>
        <taxon>Myomorpha</taxon>
        <taxon>Muroidea</taxon>
        <taxon>Muridae</taxon>
        <taxon>Murinae</taxon>
        <taxon>Rattus</taxon>
    </lineage>
</organism>
<comment type="function">
    <text evidence="1">May have a role in neuroendocrine differentiation. Inhibits adipocyte differentiation.</text>
</comment>
<comment type="subunit">
    <text evidence="1 4">Monomer (By similarity). Interacts with SH3RF2 (PubMed:22128169).</text>
</comment>
<comment type="subcellular location">
    <subcellularLocation>
        <location evidence="2">Membrane</location>
        <topology>Single-pass type I membrane protein</topology>
    </subcellularLocation>
    <subcellularLocation>
        <location evidence="6">Cytoplasm</location>
    </subcellularLocation>
</comment>
<comment type="tissue specificity">
    <text evidence="5 6">Pancreas and adrenal glands (at protein level).</text>
</comment>
<comment type="developmental stage">
    <text evidence="6">Embryonic pancreas and adrenal glands (at protein level).</text>
</comment>
<comment type="PTM">
    <text evidence="1">Glycosylated.</text>
</comment>
<keyword id="KW-0963">Cytoplasm</keyword>
<keyword id="KW-1015">Disulfide bond</keyword>
<keyword id="KW-0245">EGF-like domain</keyword>
<keyword id="KW-0325">Glycoprotein</keyword>
<keyword id="KW-0472">Membrane</keyword>
<keyword id="KW-1185">Reference proteome</keyword>
<keyword id="KW-0677">Repeat</keyword>
<keyword id="KW-0732">Signal</keyword>
<keyword id="KW-0812">Transmembrane</keyword>
<keyword id="KW-1133">Transmembrane helix</keyword>
<gene>
    <name type="primary">Dlk1</name>
    <name type="synonym">Dlk</name>
    <name evidence="7 8" type="synonym">Pref1</name>
    <name evidence="8" type="synonym">Zog</name>
</gene>
<dbReference type="EMBL" id="U25680">
    <property type="protein sequence ID" value="AAB87095.1"/>
    <property type="molecule type" value="mRNA"/>
</dbReference>
<dbReference type="EMBL" id="D84336">
    <property type="protein sequence ID" value="BAA25881.1"/>
    <property type="molecule type" value="mRNA"/>
</dbReference>
<dbReference type="EMBL" id="AABR07065528">
    <property type="status" value="NOT_ANNOTATED_CDS"/>
    <property type="molecule type" value="Genomic_DNA"/>
</dbReference>
<dbReference type="EMBL" id="AABR07065529">
    <property type="status" value="NOT_ANNOTATED_CDS"/>
    <property type="molecule type" value="Genomic_DNA"/>
</dbReference>
<dbReference type="EMBL" id="BC167752">
    <property type="protein sequence ID" value="AAI67752.1"/>
    <property type="molecule type" value="mRNA"/>
</dbReference>
<dbReference type="RefSeq" id="NP_446196.1">
    <property type="nucleotide sequence ID" value="NM_053744.2"/>
</dbReference>
<dbReference type="SMR" id="O70534"/>
<dbReference type="FunCoup" id="O70534">
    <property type="interactions" value="18"/>
</dbReference>
<dbReference type="STRING" id="10116.ENSRNOP00000069391"/>
<dbReference type="iPTMnet" id="O70534"/>
<dbReference type="PhosphoSitePlus" id="O70534"/>
<dbReference type="PaxDb" id="10116-ENSRNOP00000006339"/>
<dbReference type="Ensembl" id="ENSRNOT00000085933.2">
    <property type="protein sequence ID" value="ENSRNOP00000069391.1"/>
    <property type="gene ID" value="ENSRNOG00000019584.7"/>
</dbReference>
<dbReference type="GeneID" id="114587"/>
<dbReference type="KEGG" id="rno:114587"/>
<dbReference type="AGR" id="RGD:619931"/>
<dbReference type="CTD" id="8788"/>
<dbReference type="RGD" id="619931">
    <property type="gene designation" value="Dlk1"/>
</dbReference>
<dbReference type="eggNOG" id="KOG1217">
    <property type="taxonomic scope" value="Eukaryota"/>
</dbReference>
<dbReference type="GeneTree" id="ENSGT00940000154225"/>
<dbReference type="HOGENOM" id="CLU_039179_0_1_1"/>
<dbReference type="InParanoid" id="O70534"/>
<dbReference type="OMA" id="MQNYKPP"/>
<dbReference type="OrthoDB" id="6130531at2759"/>
<dbReference type="PhylomeDB" id="O70534"/>
<dbReference type="TreeFam" id="TF351835"/>
<dbReference type="PRO" id="PR:O70534"/>
<dbReference type="Proteomes" id="UP000002494">
    <property type="component" value="Chromosome 6"/>
</dbReference>
<dbReference type="Bgee" id="ENSRNOG00000019584">
    <property type="expression patterns" value="Expressed in stomach and 11 other cell types or tissues"/>
</dbReference>
<dbReference type="GO" id="GO:0005737">
    <property type="term" value="C:cytoplasm"/>
    <property type="evidence" value="ECO:0007669"/>
    <property type="project" value="UniProtKB-SubCell"/>
</dbReference>
<dbReference type="GO" id="GO:0009897">
    <property type="term" value="C:external side of plasma membrane"/>
    <property type="evidence" value="ECO:0000266"/>
    <property type="project" value="RGD"/>
</dbReference>
<dbReference type="GO" id="GO:0005615">
    <property type="term" value="C:extracellular space"/>
    <property type="evidence" value="ECO:0000266"/>
    <property type="project" value="RGD"/>
</dbReference>
<dbReference type="GO" id="GO:0016020">
    <property type="term" value="C:membrane"/>
    <property type="evidence" value="ECO:0000318"/>
    <property type="project" value="GO_Central"/>
</dbReference>
<dbReference type="GO" id="GO:0005509">
    <property type="term" value="F:calcium ion binding"/>
    <property type="evidence" value="ECO:0007669"/>
    <property type="project" value="InterPro"/>
</dbReference>
<dbReference type="GO" id="GO:0030282">
    <property type="term" value="P:bone mineralization"/>
    <property type="evidence" value="ECO:0000266"/>
    <property type="project" value="RGD"/>
</dbReference>
<dbReference type="GO" id="GO:0030154">
    <property type="term" value="P:cell differentiation"/>
    <property type="evidence" value="ECO:0000314"/>
    <property type="project" value="RGD"/>
</dbReference>
<dbReference type="GO" id="GO:0048706">
    <property type="term" value="P:embryonic skeletal system development"/>
    <property type="evidence" value="ECO:0000266"/>
    <property type="project" value="RGD"/>
</dbReference>
<dbReference type="GO" id="GO:0035264">
    <property type="term" value="P:multicellular organism growth"/>
    <property type="evidence" value="ECO:0000266"/>
    <property type="project" value="RGD"/>
</dbReference>
<dbReference type="GO" id="GO:0045599">
    <property type="term" value="P:negative regulation of fat cell differentiation"/>
    <property type="evidence" value="ECO:0000266"/>
    <property type="project" value="RGD"/>
</dbReference>
<dbReference type="GO" id="GO:0045746">
    <property type="term" value="P:negative regulation of Notch signaling pathway"/>
    <property type="evidence" value="ECO:0000266"/>
    <property type="project" value="RGD"/>
</dbReference>
<dbReference type="GO" id="GO:1905563">
    <property type="term" value="P:negative regulation of vascular endothelial cell proliferation"/>
    <property type="evidence" value="ECO:0000266"/>
    <property type="project" value="RGD"/>
</dbReference>
<dbReference type="GO" id="GO:0001503">
    <property type="term" value="P:ossification"/>
    <property type="evidence" value="ECO:0000266"/>
    <property type="project" value="RGD"/>
</dbReference>
<dbReference type="GO" id="GO:0001649">
    <property type="term" value="P:osteoblast differentiation"/>
    <property type="evidence" value="ECO:0000266"/>
    <property type="project" value="RGD"/>
</dbReference>
<dbReference type="GO" id="GO:0045780">
    <property type="term" value="P:positive regulation of bone resorption"/>
    <property type="evidence" value="ECO:0000266"/>
    <property type="project" value="RGD"/>
</dbReference>
<dbReference type="GO" id="GO:0001819">
    <property type="term" value="P:positive regulation of cytokine production"/>
    <property type="evidence" value="ECO:0000266"/>
    <property type="project" value="RGD"/>
</dbReference>
<dbReference type="GO" id="GO:0009791">
    <property type="term" value="P:post-embryonic development"/>
    <property type="evidence" value="ECO:0000266"/>
    <property type="project" value="RGD"/>
</dbReference>
<dbReference type="GO" id="GO:0010468">
    <property type="term" value="P:regulation of gene expression"/>
    <property type="evidence" value="ECO:0000266"/>
    <property type="project" value="RGD"/>
</dbReference>
<dbReference type="CDD" id="cd00054">
    <property type="entry name" value="EGF_CA"/>
    <property type="match status" value="4"/>
</dbReference>
<dbReference type="FunFam" id="2.10.25.10:FF:000925">
    <property type="entry name" value="Delta like non-canonical Notch ligand 1"/>
    <property type="match status" value="1"/>
</dbReference>
<dbReference type="FunFam" id="2.10.25.10:FF:000018">
    <property type="entry name" value="Delta-like 1"/>
    <property type="match status" value="1"/>
</dbReference>
<dbReference type="FunFam" id="2.10.25.10:FF:000321">
    <property type="entry name" value="Protein delta homolog 1"/>
    <property type="match status" value="1"/>
</dbReference>
<dbReference type="FunFam" id="2.10.25.10:FF:000551">
    <property type="entry name" value="Protein delta homolog 1"/>
    <property type="match status" value="1"/>
</dbReference>
<dbReference type="FunFam" id="2.10.25.10:FF:000118">
    <property type="entry name" value="protein delta homolog 2"/>
    <property type="match status" value="1"/>
</dbReference>
<dbReference type="Gene3D" id="2.10.25.10">
    <property type="entry name" value="Laminin"/>
    <property type="match status" value="5"/>
</dbReference>
<dbReference type="InterPro" id="IPR001881">
    <property type="entry name" value="EGF-like_Ca-bd_dom"/>
</dbReference>
<dbReference type="InterPro" id="IPR013032">
    <property type="entry name" value="EGF-like_CS"/>
</dbReference>
<dbReference type="InterPro" id="IPR000742">
    <property type="entry name" value="EGF-like_dom"/>
</dbReference>
<dbReference type="InterPro" id="IPR000152">
    <property type="entry name" value="EGF-type_Asp/Asn_hydroxyl_site"/>
</dbReference>
<dbReference type="InterPro" id="IPR051022">
    <property type="entry name" value="Notch_Cell-Fate_Det"/>
</dbReference>
<dbReference type="PANTHER" id="PTHR24049">
    <property type="entry name" value="CRUMBS FAMILY MEMBER"/>
    <property type="match status" value="1"/>
</dbReference>
<dbReference type="PANTHER" id="PTHR24049:SF42">
    <property type="entry name" value="DELTA LIKE NON-CANONICAL NOTCH LIGAND 1"/>
    <property type="match status" value="1"/>
</dbReference>
<dbReference type="Pfam" id="PF00008">
    <property type="entry name" value="EGF"/>
    <property type="match status" value="4"/>
</dbReference>
<dbReference type="Pfam" id="PF21700">
    <property type="entry name" value="EGF_DL_JAG"/>
    <property type="match status" value="1"/>
</dbReference>
<dbReference type="Pfam" id="PF12661">
    <property type="entry name" value="hEGF"/>
    <property type="match status" value="1"/>
</dbReference>
<dbReference type="PRINTS" id="PR00010">
    <property type="entry name" value="EGFBLOOD"/>
</dbReference>
<dbReference type="SMART" id="SM00181">
    <property type="entry name" value="EGF"/>
    <property type="match status" value="6"/>
</dbReference>
<dbReference type="SMART" id="SM00179">
    <property type="entry name" value="EGF_CA"/>
    <property type="match status" value="4"/>
</dbReference>
<dbReference type="SUPFAM" id="SSF57196">
    <property type="entry name" value="EGF/Laminin"/>
    <property type="match status" value="4"/>
</dbReference>
<dbReference type="PROSITE" id="PS00010">
    <property type="entry name" value="ASX_HYDROXYL"/>
    <property type="match status" value="1"/>
</dbReference>
<dbReference type="PROSITE" id="PS00022">
    <property type="entry name" value="EGF_1"/>
    <property type="match status" value="5"/>
</dbReference>
<dbReference type="PROSITE" id="PS01186">
    <property type="entry name" value="EGF_2"/>
    <property type="match status" value="6"/>
</dbReference>
<dbReference type="PROSITE" id="PS50026">
    <property type="entry name" value="EGF_3"/>
    <property type="match status" value="6"/>
</dbReference>